<keyword id="KW-0067">ATP-binding</keyword>
<keyword id="KW-0963">Cytoplasm</keyword>
<keyword id="KW-0227">DNA damage</keyword>
<keyword id="KW-0233">DNA recombination</keyword>
<keyword id="KW-0234">DNA repair</keyword>
<keyword id="KW-0238">DNA-binding</keyword>
<keyword id="KW-0378">Hydrolase</keyword>
<keyword id="KW-0547">Nucleotide-binding</keyword>
<comment type="function">
    <text evidence="1">The RuvA-RuvB-RuvC complex processes Holliday junction (HJ) DNA during genetic recombination and DNA repair, while the RuvA-RuvB complex plays an important role in the rescue of blocked DNA replication forks via replication fork reversal (RFR). RuvA specifically binds to HJ cruciform DNA, conferring on it an open structure. The RuvB hexamer acts as an ATP-dependent pump, pulling dsDNA into and through the RuvAB complex. RuvB forms 2 homohexamers on either side of HJ DNA bound by 1 or 2 RuvA tetramers; 4 subunits per hexamer contact DNA at a time. Coordinated motions by a converter formed by DNA-disengaged RuvB subunits stimulates ATP hydrolysis and nucleotide exchange. Immobilization of the converter enables RuvB to convert the ATP-contained energy into a lever motion, pulling 2 nucleotides of DNA out of the RuvA tetramer per ATP hydrolyzed, thus driving DNA branch migration. The RuvB motors rotate together with the DNA substrate, which together with the progressing nucleotide cycle form the mechanistic basis for DNA recombination by continuous HJ branch migration. Branch migration allows RuvC to scan DNA until it finds its consensus sequence, where it cleaves and resolves cruciform DNA.</text>
</comment>
<comment type="catalytic activity">
    <reaction evidence="1">
        <text>ATP + H2O = ADP + phosphate + H(+)</text>
        <dbReference type="Rhea" id="RHEA:13065"/>
        <dbReference type="ChEBI" id="CHEBI:15377"/>
        <dbReference type="ChEBI" id="CHEBI:15378"/>
        <dbReference type="ChEBI" id="CHEBI:30616"/>
        <dbReference type="ChEBI" id="CHEBI:43474"/>
        <dbReference type="ChEBI" id="CHEBI:456216"/>
    </reaction>
</comment>
<comment type="subunit">
    <text evidence="1">Homohexamer. Forms an RuvA(8)-RuvB(12)-Holliday junction (HJ) complex. HJ DNA is sandwiched between 2 RuvA tetramers; dsDNA enters through RuvA and exits via RuvB. An RuvB hexamer assembles on each DNA strand where it exits the tetramer. Each RuvB hexamer is contacted by two RuvA subunits (via domain III) on 2 adjacent RuvB subunits; this complex drives branch migration. In the full resolvosome a probable DNA-RuvA(4)-RuvB(12)-RuvC(2) complex forms which resolves the HJ.</text>
</comment>
<comment type="subcellular location">
    <subcellularLocation>
        <location evidence="1">Cytoplasm</location>
    </subcellularLocation>
</comment>
<comment type="domain">
    <text evidence="1">Has 3 domains, the large (RuvB-L) and small ATPase (RuvB-S) domains and the C-terminal head (RuvB-H) domain. The head domain binds DNA, while the ATPase domains jointly bind ATP, ADP or are empty depending on the state of the subunit in the translocation cycle. During a single DNA translocation step the structure of each domain remains the same, but their relative positions change.</text>
</comment>
<comment type="similarity">
    <text evidence="1">Belongs to the RuvB family.</text>
</comment>
<organism>
    <name type="scientific">Staphylococcus aureus (strain JH9)</name>
    <dbReference type="NCBI Taxonomy" id="359786"/>
    <lineage>
        <taxon>Bacteria</taxon>
        <taxon>Bacillati</taxon>
        <taxon>Bacillota</taxon>
        <taxon>Bacilli</taxon>
        <taxon>Bacillales</taxon>
        <taxon>Staphylococcaceae</taxon>
        <taxon>Staphylococcus</taxon>
    </lineage>
</organism>
<gene>
    <name evidence="1" type="primary">ruvB</name>
    <name type="ordered locus">SaurJH9_1698</name>
</gene>
<proteinExistence type="inferred from homology"/>
<accession>A5ITG5</accession>
<sequence>MNERMVDQSMHSEETDFELSLRPTRLRQYIGQNSIKSNLEVFIKAAKLRHEPLDHVLLFGPPGLGKTTLSNIIANEMEVNIRTVSGPSLERPGDLAAILSGLQPGDVLFIDEIHRLSSVVEEVLYPAMEDFFLDIIIGKGDEARSIRIDLPPFTLVGATTRAGSLTGPLRDRFGVHLRLEYYNESDLKEIIIRTAEVLGTGIDEESAIELAKRSRGTPRVANRLLKRVRDFQQVNEDEQIYIETTKHALGLLQVDQHGLDYIDHKMMNCIIKQYNGGPVGLDTIAVTIGEERITIEDVYEPFLIQKGFLERTPRGRKATPLAYEHFAKSNEERG</sequence>
<reference key="1">
    <citation type="submission" date="2007-05" db="EMBL/GenBank/DDBJ databases">
        <title>Complete sequence of chromosome of Staphylococcus aureus subsp. aureus JH9.</title>
        <authorList>
            <consortium name="US DOE Joint Genome Institute"/>
            <person name="Copeland A."/>
            <person name="Lucas S."/>
            <person name="Lapidus A."/>
            <person name="Barry K."/>
            <person name="Detter J.C."/>
            <person name="Glavina del Rio T."/>
            <person name="Hammon N."/>
            <person name="Israni S."/>
            <person name="Pitluck S."/>
            <person name="Chain P."/>
            <person name="Malfatti S."/>
            <person name="Shin M."/>
            <person name="Vergez L."/>
            <person name="Schmutz J."/>
            <person name="Larimer F."/>
            <person name="Land M."/>
            <person name="Hauser L."/>
            <person name="Kyrpides N."/>
            <person name="Kim E."/>
            <person name="Tomasz A."/>
            <person name="Richardson P."/>
        </authorList>
    </citation>
    <scope>NUCLEOTIDE SEQUENCE [LARGE SCALE GENOMIC DNA]</scope>
    <source>
        <strain>JH9</strain>
    </source>
</reference>
<evidence type="ECO:0000255" key="1">
    <source>
        <dbReference type="HAMAP-Rule" id="MF_00016"/>
    </source>
</evidence>
<name>RUVB_STAA9</name>
<feature type="chain" id="PRO_1000074105" description="Holliday junction branch migration complex subunit RuvB">
    <location>
        <begin position="1"/>
        <end position="334"/>
    </location>
</feature>
<feature type="region of interest" description="Large ATPase domain (RuvB-L)" evidence="1">
    <location>
        <begin position="1"/>
        <end position="182"/>
    </location>
</feature>
<feature type="region of interest" description="Small ATPAse domain (RuvB-S)" evidence="1">
    <location>
        <begin position="183"/>
        <end position="253"/>
    </location>
</feature>
<feature type="region of interest" description="Head domain (RuvB-H)" evidence="1">
    <location>
        <begin position="256"/>
        <end position="334"/>
    </location>
</feature>
<feature type="binding site" evidence="1">
    <location>
        <position position="21"/>
    </location>
    <ligand>
        <name>ATP</name>
        <dbReference type="ChEBI" id="CHEBI:30616"/>
    </ligand>
</feature>
<feature type="binding site" evidence="1">
    <location>
        <position position="22"/>
    </location>
    <ligand>
        <name>ATP</name>
        <dbReference type="ChEBI" id="CHEBI:30616"/>
    </ligand>
</feature>
<feature type="binding site" evidence="1">
    <location>
        <position position="63"/>
    </location>
    <ligand>
        <name>ATP</name>
        <dbReference type="ChEBI" id="CHEBI:30616"/>
    </ligand>
</feature>
<feature type="binding site" evidence="1">
    <location>
        <position position="66"/>
    </location>
    <ligand>
        <name>ATP</name>
        <dbReference type="ChEBI" id="CHEBI:30616"/>
    </ligand>
</feature>
<feature type="binding site" evidence="1">
    <location>
        <position position="67"/>
    </location>
    <ligand>
        <name>ATP</name>
        <dbReference type="ChEBI" id="CHEBI:30616"/>
    </ligand>
</feature>
<feature type="binding site" evidence="1">
    <location>
        <position position="67"/>
    </location>
    <ligand>
        <name>Mg(2+)</name>
        <dbReference type="ChEBI" id="CHEBI:18420"/>
    </ligand>
</feature>
<feature type="binding site" evidence="1">
    <location>
        <position position="68"/>
    </location>
    <ligand>
        <name>ATP</name>
        <dbReference type="ChEBI" id="CHEBI:30616"/>
    </ligand>
</feature>
<feature type="binding site" evidence="1">
    <location>
        <begin position="129"/>
        <end position="131"/>
    </location>
    <ligand>
        <name>ATP</name>
        <dbReference type="ChEBI" id="CHEBI:30616"/>
    </ligand>
</feature>
<feature type="binding site" evidence="1">
    <location>
        <position position="172"/>
    </location>
    <ligand>
        <name>ATP</name>
        <dbReference type="ChEBI" id="CHEBI:30616"/>
    </ligand>
</feature>
<feature type="binding site" evidence="1">
    <location>
        <position position="182"/>
    </location>
    <ligand>
        <name>ATP</name>
        <dbReference type="ChEBI" id="CHEBI:30616"/>
    </ligand>
</feature>
<feature type="binding site" evidence="1">
    <location>
        <position position="219"/>
    </location>
    <ligand>
        <name>ATP</name>
        <dbReference type="ChEBI" id="CHEBI:30616"/>
    </ligand>
</feature>
<feature type="binding site" evidence="1">
    <location>
        <position position="292"/>
    </location>
    <ligand>
        <name>DNA</name>
        <dbReference type="ChEBI" id="CHEBI:16991"/>
    </ligand>
</feature>
<feature type="binding site" evidence="1">
    <location>
        <position position="311"/>
    </location>
    <ligand>
        <name>DNA</name>
        <dbReference type="ChEBI" id="CHEBI:16991"/>
    </ligand>
</feature>
<feature type="binding site" evidence="1">
    <location>
        <position position="316"/>
    </location>
    <ligand>
        <name>DNA</name>
        <dbReference type="ChEBI" id="CHEBI:16991"/>
    </ligand>
</feature>
<dbReference type="EC" id="3.6.4.-" evidence="1"/>
<dbReference type="EMBL" id="CP000703">
    <property type="protein sequence ID" value="ABQ49488.1"/>
    <property type="molecule type" value="Genomic_DNA"/>
</dbReference>
<dbReference type="RefSeq" id="WP_001005768.1">
    <property type="nucleotide sequence ID" value="NC_009487.1"/>
</dbReference>
<dbReference type="SMR" id="A5ITG5"/>
<dbReference type="KEGG" id="saj:SaurJH9_1698"/>
<dbReference type="HOGENOM" id="CLU_055599_1_0_9"/>
<dbReference type="GO" id="GO:0005737">
    <property type="term" value="C:cytoplasm"/>
    <property type="evidence" value="ECO:0007669"/>
    <property type="project" value="UniProtKB-SubCell"/>
</dbReference>
<dbReference type="GO" id="GO:0048476">
    <property type="term" value="C:Holliday junction resolvase complex"/>
    <property type="evidence" value="ECO:0007669"/>
    <property type="project" value="UniProtKB-UniRule"/>
</dbReference>
<dbReference type="GO" id="GO:0005524">
    <property type="term" value="F:ATP binding"/>
    <property type="evidence" value="ECO:0007669"/>
    <property type="project" value="UniProtKB-UniRule"/>
</dbReference>
<dbReference type="GO" id="GO:0016887">
    <property type="term" value="F:ATP hydrolysis activity"/>
    <property type="evidence" value="ECO:0007669"/>
    <property type="project" value="InterPro"/>
</dbReference>
<dbReference type="GO" id="GO:0000400">
    <property type="term" value="F:four-way junction DNA binding"/>
    <property type="evidence" value="ECO:0007669"/>
    <property type="project" value="UniProtKB-UniRule"/>
</dbReference>
<dbReference type="GO" id="GO:0009378">
    <property type="term" value="F:four-way junction helicase activity"/>
    <property type="evidence" value="ECO:0007669"/>
    <property type="project" value="InterPro"/>
</dbReference>
<dbReference type="GO" id="GO:0006310">
    <property type="term" value="P:DNA recombination"/>
    <property type="evidence" value="ECO:0007669"/>
    <property type="project" value="UniProtKB-UniRule"/>
</dbReference>
<dbReference type="GO" id="GO:0006281">
    <property type="term" value="P:DNA repair"/>
    <property type="evidence" value="ECO:0007669"/>
    <property type="project" value="UniProtKB-UniRule"/>
</dbReference>
<dbReference type="CDD" id="cd00009">
    <property type="entry name" value="AAA"/>
    <property type="match status" value="1"/>
</dbReference>
<dbReference type="Gene3D" id="1.10.8.60">
    <property type="match status" value="1"/>
</dbReference>
<dbReference type="Gene3D" id="3.40.50.300">
    <property type="entry name" value="P-loop containing nucleotide triphosphate hydrolases"/>
    <property type="match status" value="1"/>
</dbReference>
<dbReference type="Gene3D" id="1.10.10.10">
    <property type="entry name" value="Winged helix-like DNA-binding domain superfamily/Winged helix DNA-binding domain"/>
    <property type="match status" value="1"/>
</dbReference>
<dbReference type="HAMAP" id="MF_00016">
    <property type="entry name" value="DNA_HJ_migration_RuvB"/>
    <property type="match status" value="1"/>
</dbReference>
<dbReference type="InterPro" id="IPR003593">
    <property type="entry name" value="AAA+_ATPase"/>
</dbReference>
<dbReference type="InterPro" id="IPR041445">
    <property type="entry name" value="AAA_lid_4"/>
</dbReference>
<dbReference type="InterPro" id="IPR004605">
    <property type="entry name" value="DNA_helicase_Holl-junc_RuvB"/>
</dbReference>
<dbReference type="InterPro" id="IPR027417">
    <property type="entry name" value="P-loop_NTPase"/>
</dbReference>
<dbReference type="InterPro" id="IPR008824">
    <property type="entry name" value="RuvB-like_N"/>
</dbReference>
<dbReference type="InterPro" id="IPR008823">
    <property type="entry name" value="RuvB_C"/>
</dbReference>
<dbReference type="InterPro" id="IPR036388">
    <property type="entry name" value="WH-like_DNA-bd_sf"/>
</dbReference>
<dbReference type="InterPro" id="IPR036390">
    <property type="entry name" value="WH_DNA-bd_sf"/>
</dbReference>
<dbReference type="NCBIfam" id="NF000868">
    <property type="entry name" value="PRK00080.1"/>
    <property type="match status" value="1"/>
</dbReference>
<dbReference type="NCBIfam" id="TIGR00635">
    <property type="entry name" value="ruvB"/>
    <property type="match status" value="1"/>
</dbReference>
<dbReference type="PANTHER" id="PTHR42848">
    <property type="match status" value="1"/>
</dbReference>
<dbReference type="PANTHER" id="PTHR42848:SF1">
    <property type="entry name" value="HOLLIDAY JUNCTION BRANCH MIGRATION COMPLEX SUBUNIT RUVB"/>
    <property type="match status" value="1"/>
</dbReference>
<dbReference type="Pfam" id="PF17864">
    <property type="entry name" value="AAA_lid_4"/>
    <property type="match status" value="1"/>
</dbReference>
<dbReference type="Pfam" id="PF05491">
    <property type="entry name" value="RuvB_C"/>
    <property type="match status" value="1"/>
</dbReference>
<dbReference type="Pfam" id="PF05496">
    <property type="entry name" value="RuvB_N"/>
    <property type="match status" value="1"/>
</dbReference>
<dbReference type="SMART" id="SM00382">
    <property type="entry name" value="AAA"/>
    <property type="match status" value="1"/>
</dbReference>
<dbReference type="SUPFAM" id="SSF52540">
    <property type="entry name" value="P-loop containing nucleoside triphosphate hydrolases"/>
    <property type="match status" value="1"/>
</dbReference>
<dbReference type="SUPFAM" id="SSF46785">
    <property type="entry name" value="Winged helix' DNA-binding domain"/>
    <property type="match status" value="1"/>
</dbReference>
<protein>
    <recommendedName>
        <fullName evidence="1">Holliday junction branch migration complex subunit RuvB</fullName>
        <ecNumber evidence="1">3.6.4.-</ecNumber>
    </recommendedName>
</protein>